<comment type="function">
    <text evidence="1">Located at the top of the head of the 30S subunit, it contacts several helices of the 16S rRNA. In the 70S ribosome it contacts the 23S rRNA (bridge B1a) and protein L5 of the 50S subunit (bridge B1b), connecting the 2 subunits; these bridges are implicated in subunit movement. Contacts the tRNAs in the A and P-sites.</text>
</comment>
<comment type="subunit">
    <text evidence="1">Part of the 30S ribosomal subunit. Forms a loose heterodimer with protein S19. Forms two bridges to the 50S subunit in the 70S ribosome.</text>
</comment>
<comment type="similarity">
    <text evidence="1">Belongs to the universal ribosomal protein uS13 family.</text>
</comment>
<dbReference type="EMBL" id="CP000115">
    <property type="protein sequence ID" value="ABA04647.1"/>
    <property type="molecule type" value="Genomic_DNA"/>
</dbReference>
<dbReference type="RefSeq" id="WP_009797115.1">
    <property type="nucleotide sequence ID" value="NC_007406.1"/>
</dbReference>
<dbReference type="SMR" id="Q3SSU4"/>
<dbReference type="STRING" id="323098.Nwi_1386"/>
<dbReference type="KEGG" id="nwi:Nwi_1386"/>
<dbReference type="eggNOG" id="COG0099">
    <property type="taxonomic scope" value="Bacteria"/>
</dbReference>
<dbReference type="HOGENOM" id="CLU_103849_1_2_5"/>
<dbReference type="OrthoDB" id="9803610at2"/>
<dbReference type="Proteomes" id="UP000002531">
    <property type="component" value="Chromosome"/>
</dbReference>
<dbReference type="GO" id="GO:0005829">
    <property type="term" value="C:cytosol"/>
    <property type="evidence" value="ECO:0007669"/>
    <property type="project" value="TreeGrafter"/>
</dbReference>
<dbReference type="GO" id="GO:0015935">
    <property type="term" value="C:small ribosomal subunit"/>
    <property type="evidence" value="ECO:0007669"/>
    <property type="project" value="TreeGrafter"/>
</dbReference>
<dbReference type="GO" id="GO:0019843">
    <property type="term" value="F:rRNA binding"/>
    <property type="evidence" value="ECO:0007669"/>
    <property type="project" value="UniProtKB-UniRule"/>
</dbReference>
<dbReference type="GO" id="GO:0003735">
    <property type="term" value="F:structural constituent of ribosome"/>
    <property type="evidence" value="ECO:0007669"/>
    <property type="project" value="InterPro"/>
</dbReference>
<dbReference type="GO" id="GO:0000049">
    <property type="term" value="F:tRNA binding"/>
    <property type="evidence" value="ECO:0007669"/>
    <property type="project" value="UniProtKB-UniRule"/>
</dbReference>
<dbReference type="GO" id="GO:0006412">
    <property type="term" value="P:translation"/>
    <property type="evidence" value="ECO:0007669"/>
    <property type="project" value="UniProtKB-UniRule"/>
</dbReference>
<dbReference type="FunFam" id="1.10.8.50:FF:000001">
    <property type="entry name" value="30S ribosomal protein S13"/>
    <property type="match status" value="1"/>
</dbReference>
<dbReference type="FunFam" id="4.10.910.10:FF:000001">
    <property type="entry name" value="30S ribosomal protein S13"/>
    <property type="match status" value="1"/>
</dbReference>
<dbReference type="Gene3D" id="1.10.8.50">
    <property type="match status" value="1"/>
</dbReference>
<dbReference type="Gene3D" id="4.10.910.10">
    <property type="entry name" value="30s ribosomal protein s13, domain 2"/>
    <property type="match status" value="1"/>
</dbReference>
<dbReference type="HAMAP" id="MF_01315">
    <property type="entry name" value="Ribosomal_uS13"/>
    <property type="match status" value="1"/>
</dbReference>
<dbReference type="InterPro" id="IPR027437">
    <property type="entry name" value="Rbsml_uS13_C"/>
</dbReference>
<dbReference type="InterPro" id="IPR001892">
    <property type="entry name" value="Ribosomal_uS13"/>
</dbReference>
<dbReference type="InterPro" id="IPR010979">
    <property type="entry name" value="Ribosomal_uS13-like_H2TH"/>
</dbReference>
<dbReference type="InterPro" id="IPR019980">
    <property type="entry name" value="Ribosomal_uS13_bac-type"/>
</dbReference>
<dbReference type="InterPro" id="IPR018269">
    <property type="entry name" value="Ribosomal_uS13_CS"/>
</dbReference>
<dbReference type="NCBIfam" id="TIGR03631">
    <property type="entry name" value="uS13_bact"/>
    <property type="match status" value="1"/>
</dbReference>
<dbReference type="PANTHER" id="PTHR10871">
    <property type="entry name" value="30S RIBOSOMAL PROTEIN S13/40S RIBOSOMAL PROTEIN S18"/>
    <property type="match status" value="1"/>
</dbReference>
<dbReference type="PANTHER" id="PTHR10871:SF1">
    <property type="entry name" value="SMALL RIBOSOMAL SUBUNIT PROTEIN US13M"/>
    <property type="match status" value="1"/>
</dbReference>
<dbReference type="Pfam" id="PF00416">
    <property type="entry name" value="Ribosomal_S13"/>
    <property type="match status" value="1"/>
</dbReference>
<dbReference type="PIRSF" id="PIRSF002134">
    <property type="entry name" value="Ribosomal_S13"/>
    <property type="match status" value="1"/>
</dbReference>
<dbReference type="SUPFAM" id="SSF46946">
    <property type="entry name" value="S13-like H2TH domain"/>
    <property type="match status" value="1"/>
</dbReference>
<dbReference type="PROSITE" id="PS00646">
    <property type="entry name" value="RIBOSOMAL_S13_1"/>
    <property type="match status" value="1"/>
</dbReference>
<dbReference type="PROSITE" id="PS50159">
    <property type="entry name" value="RIBOSOMAL_S13_2"/>
    <property type="match status" value="1"/>
</dbReference>
<accession>Q3SSU4</accession>
<name>RS13_NITWN</name>
<sequence>MARIAGVNIPTNKRVVIALQYIHGIGQKNAAEIIEKVKIPADRRVSQLTDQEVLQIREVIDRDYLVEGDLRREVGINIKRLMDLGCYRGLRHRRGLPVRGQRTHTNARTRKGPAKSIAGKKK</sequence>
<gene>
    <name evidence="1" type="primary">rpsM</name>
    <name type="ordered locus">Nwi_1386</name>
</gene>
<proteinExistence type="inferred from homology"/>
<keyword id="KW-1185">Reference proteome</keyword>
<keyword id="KW-0687">Ribonucleoprotein</keyword>
<keyword id="KW-0689">Ribosomal protein</keyword>
<keyword id="KW-0694">RNA-binding</keyword>
<keyword id="KW-0699">rRNA-binding</keyword>
<keyword id="KW-0820">tRNA-binding</keyword>
<evidence type="ECO:0000255" key="1">
    <source>
        <dbReference type="HAMAP-Rule" id="MF_01315"/>
    </source>
</evidence>
<evidence type="ECO:0000256" key="2">
    <source>
        <dbReference type="SAM" id="MobiDB-lite"/>
    </source>
</evidence>
<evidence type="ECO:0000305" key="3"/>
<protein>
    <recommendedName>
        <fullName evidence="1">Small ribosomal subunit protein uS13</fullName>
    </recommendedName>
    <alternativeName>
        <fullName evidence="3">30S ribosomal protein S13</fullName>
    </alternativeName>
</protein>
<organism>
    <name type="scientific">Nitrobacter winogradskyi (strain ATCC 25391 / DSM 10237 / CIP 104748 / NCIMB 11846 / Nb-255)</name>
    <dbReference type="NCBI Taxonomy" id="323098"/>
    <lineage>
        <taxon>Bacteria</taxon>
        <taxon>Pseudomonadati</taxon>
        <taxon>Pseudomonadota</taxon>
        <taxon>Alphaproteobacteria</taxon>
        <taxon>Hyphomicrobiales</taxon>
        <taxon>Nitrobacteraceae</taxon>
        <taxon>Nitrobacter</taxon>
    </lineage>
</organism>
<feature type="chain" id="PRO_0000230532" description="Small ribosomal subunit protein uS13">
    <location>
        <begin position="1"/>
        <end position="122"/>
    </location>
</feature>
<feature type="region of interest" description="Disordered" evidence="2">
    <location>
        <begin position="95"/>
        <end position="122"/>
    </location>
</feature>
<reference key="1">
    <citation type="journal article" date="2006" name="Appl. Environ. Microbiol.">
        <title>Genome sequence of the chemolithoautotrophic nitrite-oxidizing bacterium Nitrobacter winogradskyi Nb-255.</title>
        <authorList>
            <person name="Starkenburg S.R."/>
            <person name="Chain P.S.G."/>
            <person name="Sayavedra-Soto L.A."/>
            <person name="Hauser L."/>
            <person name="Land M.L."/>
            <person name="Larimer F.W."/>
            <person name="Malfatti S.A."/>
            <person name="Klotz M.G."/>
            <person name="Bottomley P.J."/>
            <person name="Arp D.J."/>
            <person name="Hickey W.J."/>
        </authorList>
    </citation>
    <scope>NUCLEOTIDE SEQUENCE [LARGE SCALE GENOMIC DNA]</scope>
    <source>
        <strain>ATCC 25391 / DSM 10237 / CIP 104748 / NCIMB 11846 / Nb-255</strain>
    </source>
</reference>